<keyword id="KW-0694">RNA-binding</keyword>
<keyword id="KW-0346">Stress response</keyword>
<sequence>MSNKGQTLQDPFLNTLRKEHVPVSIYLVNGIKLQGQIESFDQYVVLLRNTVTQMVYKHAISTVVPARAVNFQVEVPAE</sequence>
<comment type="function">
    <text evidence="1">RNA chaperone that binds small regulatory RNA (sRNAs) and mRNAs to facilitate mRNA translational regulation in response to envelope stress, environmental stress and changes in metabolite concentrations. Also binds with high specificity to tRNAs.</text>
</comment>
<comment type="subunit">
    <text evidence="1">Homohexamer.</text>
</comment>
<comment type="similarity">
    <text evidence="1">Belongs to the Hfq family.</text>
</comment>
<dbReference type="EMBL" id="BX640431">
    <property type="protein sequence ID" value="CAE38141.1"/>
    <property type="molecule type" value="Genomic_DNA"/>
</dbReference>
<dbReference type="RefSeq" id="WP_003810707.1">
    <property type="nucleotide sequence ID" value="NC_002928.3"/>
</dbReference>
<dbReference type="SMR" id="Q7W6Q2"/>
<dbReference type="GeneID" id="23431047"/>
<dbReference type="GeneID" id="93204636"/>
<dbReference type="KEGG" id="bpa:BPP2849"/>
<dbReference type="HOGENOM" id="CLU_113688_2_2_4"/>
<dbReference type="PHI-base" id="PHI:3532"/>
<dbReference type="Proteomes" id="UP000001421">
    <property type="component" value="Chromosome"/>
</dbReference>
<dbReference type="GO" id="GO:0005829">
    <property type="term" value="C:cytosol"/>
    <property type="evidence" value="ECO:0007669"/>
    <property type="project" value="TreeGrafter"/>
</dbReference>
<dbReference type="GO" id="GO:0003723">
    <property type="term" value="F:RNA binding"/>
    <property type="evidence" value="ECO:0007669"/>
    <property type="project" value="UniProtKB-UniRule"/>
</dbReference>
<dbReference type="GO" id="GO:0006355">
    <property type="term" value="P:regulation of DNA-templated transcription"/>
    <property type="evidence" value="ECO:0007669"/>
    <property type="project" value="InterPro"/>
</dbReference>
<dbReference type="GO" id="GO:0043487">
    <property type="term" value="P:regulation of RNA stability"/>
    <property type="evidence" value="ECO:0007669"/>
    <property type="project" value="TreeGrafter"/>
</dbReference>
<dbReference type="GO" id="GO:0045974">
    <property type="term" value="P:regulation of translation, ncRNA-mediated"/>
    <property type="evidence" value="ECO:0007669"/>
    <property type="project" value="TreeGrafter"/>
</dbReference>
<dbReference type="CDD" id="cd01716">
    <property type="entry name" value="Hfq"/>
    <property type="match status" value="1"/>
</dbReference>
<dbReference type="FunFam" id="2.30.30.100:FF:000001">
    <property type="entry name" value="RNA-binding protein Hfq"/>
    <property type="match status" value="1"/>
</dbReference>
<dbReference type="Gene3D" id="2.30.30.100">
    <property type="match status" value="1"/>
</dbReference>
<dbReference type="HAMAP" id="MF_00436">
    <property type="entry name" value="Hfq"/>
    <property type="match status" value="1"/>
</dbReference>
<dbReference type="InterPro" id="IPR005001">
    <property type="entry name" value="Hfq"/>
</dbReference>
<dbReference type="InterPro" id="IPR010920">
    <property type="entry name" value="LSM_dom_sf"/>
</dbReference>
<dbReference type="InterPro" id="IPR047575">
    <property type="entry name" value="Sm"/>
</dbReference>
<dbReference type="NCBIfam" id="TIGR02383">
    <property type="entry name" value="Hfq"/>
    <property type="match status" value="1"/>
</dbReference>
<dbReference type="NCBIfam" id="NF001602">
    <property type="entry name" value="PRK00395.1"/>
    <property type="match status" value="1"/>
</dbReference>
<dbReference type="PANTHER" id="PTHR34772">
    <property type="entry name" value="RNA-BINDING PROTEIN HFQ"/>
    <property type="match status" value="1"/>
</dbReference>
<dbReference type="PANTHER" id="PTHR34772:SF1">
    <property type="entry name" value="RNA-BINDING PROTEIN HFQ"/>
    <property type="match status" value="1"/>
</dbReference>
<dbReference type="Pfam" id="PF17209">
    <property type="entry name" value="Hfq"/>
    <property type="match status" value="1"/>
</dbReference>
<dbReference type="SUPFAM" id="SSF50182">
    <property type="entry name" value="Sm-like ribonucleoproteins"/>
    <property type="match status" value="1"/>
</dbReference>
<dbReference type="PROSITE" id="PS52002">
    <property type="entry name" value="SM"/>
    <property type="match status" value="1"/>
</dbReference>
<organism>
    <name type="scientific">Bordetella parapertussis (strain 12822 / ATCC BAA-587 / NCTC 13253)</name>
    <dbReference type="NCBI Taxonomy" id="257311"/>
    <lineage>
        <taxon>Bacteria</taxon>
        <taxon>Pseudomonadati</taxon>
        <taxon>Pseudomonadota</taxon>
        <taxon>Betaproteobacteria</taxon>
        <taxon>Burkholderiales</taxon>
        <taxon>Alcaligenaceae</taxon>
        <taxon>Bordetella</taxon>
    </lineage>
</organism>
<proteinExistence type="inferred from homology"/>
<accession>Q7W6Q2</accession>
<evidence type="ECO:0000255" key="1">
    <source>
        <dbReference type="HAMAP-Rule" id="MF_00436"/>
    </source>
</evidence>
<evidence type="ECO:0000255" key="2">
    <source>
        <dbReference type="PROSITE-ProRule" id="PRU01346"/>
    </source>
</evidence>
<name>HFQ_BORPA</name>
<gene>
    <name evidence="1" type="primary">hfq</name>
    <name type="ordered locus">BPP2849</name>
</gene>
<feature type="chain" id="PRO_0000095625" description="RNA-binding protein Hfq">
    <location>
        <begin position="1"/>
        <end position="78"/>
    </location>
</feature>
<feature type="domain" description="Sm" evidence="2">
    <location>
        <begin position="10"/>
        <end position="69"/>
    </location>
</feature>
<reference key="1">
    <citation type="journal article" date="2003" name="Nat. Genet.">
        <title>Comparative analysis of the genome sequences of Bordetella pertussis, Bordetella parapertussis and Bordetella bronchiseptica.</title>
        <authorList>
            <person name="Parkhill J."/>
            <person name="Sebaihia M."/>
            <person name="Preston A."/>
            <person name="Murphy L.D."/>
            <person name="Thomson N.R."/>
            <person name="Harris D.E."/>
            <person name="Holden M.T.G."/>
            <person name="Churcher C.M."/>
            <person name="Bentley S.D."/>
            <person name="Mungall K.L."/>
            <person name="Cerdeno-Tarraga A.-M."/>
            <person name="Temple L."/>
            <person name="James K.D."/>
            <person name="Harris B."/>
            <person name="Quail M.A."/>
            <person name="Achtman M."/>
            <person name="Atkin R."/>
            <person name="Baker S."/>
            <person name="Basham D."/>
            <person name="Bason N."/>
            <person name="Cherevach I."/>
            <person name="Chillingworth T."/>
            <person name="Collins M."/>
            <person name="Cronin A."/>
            <person name="Davis P."/>
            <person name="Doggett J."/>
            <person name="Feltwell T."/>
            <person name="Goble A."/>
            <person name="Hamlin N."/>
            <person name="Hauser H."/>
            <person name="Holroyd S."/>
            <person name="Jagels K."/>
            <person name="Leather S."/>
            <person name="Moule S."/>
            <person name="Norberczak H."/>
            <person name="O'Neil S."/>
            <person name="Ormond D."/>
            <person name="Price C."/>
            <person name="Rabbinowitsch E."/>
            <person name="Rutter S."/>
            <person name="Sanders M."/>
            <person name="Saunders D."/>
            <person name="Seeger K."/>
            <person name="Sharp S."/>
            <person name="Simmonds M."/>
            <person name="Skelton J."/>
            <person name="Squares R."/>
            <person name="Squares S."/>
            <person name="Stevens K."/>
            <person name="Unwin L."/>
            <person name="Whitehead S."/>
            <person name="Barrell B.G."/>
            <person name="Maskell D.J."/>
        </authorList>
    </citation>
    <scope>NUCLEOTIDE SEQUENCE [LARGE SCALE GENOMIC DNA]</scope>
    <source>
        <strain>12822 / ATCC BAA-587 / NCTC 13253</strain>
    </source>
</reference>
<protein>
    <recommendedName>
        <fullName evidence="1">RNA-binding protein Hfq</fullName>
    </recommendedName>
</protein>